<dbReference type="EC" id="1.1.1.298" evidence="1"/>
<dbReference type="EMBL" id="CP000468">
    <property type="protein sequence ID" value="ABJ00403.1"/>
    <property type="molecule type" value="Genomic_DNA"/>
</dbReference>
<dbReference type="RefSeq" id="WP_001001168.1">
    <property type="nucleotide sequence ID" value="NZ_CADILS010000016.1"/>
</dbReference>
<dbReference type="SMR" id="A1A9R3"/>
<dbReference type="KEGG" id="ecv:APECO1_99"/>
<dbReference type="HOGENOM" id="CLU_084441_0_0_6"/>
<dbReference type="Proteomes" id="UP000008216">
    <property type="component" value="Chromosome"/>
</dbReference>
<dbReference type="GO" id="GO:0035527">
    <property type="term" value="F:3-hydroxypropionate dehydrogenase (NADP+) activity"/>
    <property type="evidence" value="ECO:0007669"/>
    <property type="project" value="UniProtKB-UniRule"/>
</dbReference>
<dbReference type="GO" id="GO:0019740">
    <property type="term" value="P:nitrogen utilization"/>
    <property type="evidence" value="ECO:0007669"/>
    <property type="project" value="UniProtKB-UniRule"/>
</dbReference>
<dbReference type="GO" id="GO:0006212">
    <property type="term" value="P:uracil catabolic process"/>
    <property type="evidence" value="ECO:0007669"/>
    <property type="project" value="UniProtKB-UniRule"/>
</dbReference>
<dbReference type="CDD" id="cd02148">
    <property type="entry name" value="RutE-like"/>
    <property type="match status" value="1"/>
</dbReference>
<dbReference type="FunFam" id="3.40.109.10:FF:000003">
    <property type="entry name" value="Probable malonic semialdehyde reductase RutE"/>
    <property type="match status" value="1"/>
</dbReference>
<dbReference type="Gene3D" id="3.40.109.10">
    <property type="entry name" value="NADH Oxidase"/>
    <property type="match status" value="1"/>
</dbReference>
<dbReference type="HAMAP" id="MF_01204">
    <property type="entry name" value="Oxidoreductase_RutE_HadB"/>
    <property type="match status" value="1"/>
</dbReference>
<dbReference type="InterPro" id="IPR029479">
    <property type="entry name" value="Nitroreductase"/>
</dbReference>
<dbReference type="InterPro" id="IPR000415">
    <property type="entry name" value="Nitroreductase-like"/>
</dbReference>
<dbReference type="InterPro" id="IPR050461">
    <property type="entry name" value="Nitroreductase_HadB/RutE"/>
</dbReference>
<dbReference type="InterPro" id="IPR023936">
    <property type="entry name" value="RutE-like"/>
</dbReference>
<dbReference type="NCBIfam" id="NF003768">
    <property type="entry name" value="PRK05365.1"/>
    <property type="match status" value="1"/>
</dbReference>
<dbReference type="PANTHER" id="PTHR43543">
    <property type="entry name" value="MALONIC SEMIALDEHYDE REDUCTASE RUTE-RELATED"/>
    <property type="match status" value="1"/>
</dbReference>
<dbReference type="PANTHER" id="PTHR43543:SF1">
    <property type="entry name" value="MALONIC SEMIALDEHYDE REDUCTASE RUTE-RELATED"/>
    <property type="match status" value="1"/>
</dbReference>
<dbReference type="Pfam" id="PF00881">
    <property type="entry name" value="Nitroreductase"/>
    <property type="match status" value="1"/>
</dbReference>
<dbReference type="SUPFAM" id="SSF55469">
    <property type="entry name" value="FMN-dependent nitroreductase-like"/>
    <property type="match status" value="1"/>
</dbReference>
<keyword id="KW-0285">Flavoprotein</keyword>
<keyword id="KW-0288">FMN</keyword>
<keyword id="KW-0520">NAD</keyword>
<keyword id="KW-0521">NADP</keyword>
<keyword id="KW-0560">Oxidoreductase</keyword>
<keyword id="KW-1185">Reference proteome</keyword>
<organism>
    <name type="scientific">Escherichia coli O1:K1 / APEC</name>
    <dbReference type="NCBI Taxonomy" id="405955"/>
    <lineage>
        <taxon>Bacteria</taxon>
        <taxon>Pseudomonadati</taxon>
        <taxon>Pseudomonadota</taxon>
        <taxon>Gammaproteobacteria</taxon>
        <taxon>Enterobacterales</taxon>
        <taxon>Enterobacteriaceae</taxon>
        <taxon>Escherichia</taxon>
    </lineage>
</organism>
<sequence>MNEAVSPGALSTLFTDARTHNGWRETPVSDETLREIYALMKWGPTSANCSPARIVFIRTAEGKERLRPALSSGNLQKTLTAPVTAIVAWDSEFYERLPQLFPHGDARSWFTSSPQLAEETAFRNSSMQAAYLIFACRALGLDTGPMSGFDRQYVDDAFFAGSTLKSNLLINIGYGDSSKLFARLPRLSFEEACGLL</sequence>
<comment type="function">
    <text evidence="1">May reduce toxic product malonic semialdehyde to 3-hydroxypropionic acid, which is excreted.</text>
</comment>
<comment type="catalytic activity">
    <reaction evidence="1">
        <text>3-hydroxypropanoate + NADP(+) = 3-oxopropanoate + NADPH + H(+)</text>
        <dbReference type="Rhea" id="RHEA:26438"/>
        <dbReference type="ChEBI" id="CHEBI:15378"/>
        <dbReference type="ChEBI" id="CHEBI:16510"/>
        <dbReference type="ChEBI" id="CHEBI:33190"/>
        <dbReference type="ChEBI" id="CHEBI:57783"/>
        <dbReference type="ChEBI" id="CHEBI:58349"/>
        <dbReference type="EC" id="1.1.1.298"/>
    </reaction>
</comment>
<comment type="cofactor">
    <cofactor evidence="1">
        <name>FMN</name>
        <dbReference type="ChEBI" id="CHEBI:58210"/>
    </cofactor>
</comment>
<comment type="induction">
    <text evidence="1">Up-regulated by the nitrogen regulatory protein C (NtrC also called GlnG) and repressed by RutR.</text>
</comment>
<comment type="similarity">
    <text evidence="1">Belongs to the nitroreductase family. HadB/RutE subfamily.</text>
</comment>
<accession>A1A9R3</accession>
<proteinExistence type="inferred from homology"/>
<feature type="chain" id="PRO_1000066136" description="Probable malonic semialdehyde reductase RutE">
    <location>
        <begin position="1"/>
        <end position="196"/>
    </location>
</feature>
<evidence type="ECO:0000255" key="1">
    <source>
        <dbReference type="HAMAP-Rule" id="MF_01204"/>
    </source>
</evidence>
<gene>
    <name evidence="1" type="primary">rutE</name>
    <name type="ordered locus">Ecok1_09090</name>
    <name type="ORF">APECO1_99</name>
</gene>
<reference key="1">
    <citation type="journal article" date="2007" name="J. Bacteriol.">
        <title>The genome sequence of avian pathogenic Escherichia coli strain O1:K1:H7 shares strong similarities with human extraintestinal pathogenic E. coli genomes.</title>
        <authorList>
            <person name="Johnson T.J."/>
            <person name="Kariyawasam S."/>
            <person name="Wannemuehler Y."/>
            <person name="Mangiamele P."/>
            <person name="Johnson S.J."/>
            <person name="Doetkott C."/>
            <person name="Skyberg J.A."/>
            <person name="Lynne A.M."/>
            <person name="Johnson J.R."/>
            <person name="Nolan L.K."/>
        </authorList>
    </citation>
    <scope>NUCLEOTIDE SEQUENCE [LARGE SCALE GENOMIC DNA]</scope>
</reference>
<name>RUTE_ECOK1</name>
<protein>
    <recommendedName>
        <fullName evidence="1">Probable malonic semialdehyde reductase RutE</fullName>
        <ecNumber evidence="1">1.1.1.298</ecNumber>
    </recommendedName>
</protein>